<evidence type="ECO:0000256" key="1">
    <source>
        <dbReference type="SAM" id="MobiDB-lite"/>
    </source>
</evidence>
<evidence type="ECO:0000305" key="2"/>
<evidence type="ECO:0000312" key="3">
    <source>
        <dbReference type="MGI" id="MGI:3644212"/>
    </source>
</evidence>
<gene>
    <name type="primary">Spmip1</name>
    <name evidence="3" type="synonym">ATp6v1fnb</name>
    <name evidence="3" type="synonym">Gm9047</name>
</gene>
<proteinExistence type="evidence at transcript level"/>
<organism>
    <name type="scientific">Mus musculus</name>
    <name type="common">Mouse</name>
    <dbReference type="NCBI Taxonomy" id="10090"/>
    <lineage>
        <taxon>Eukaryota</taxon>
        <taxon>Metazoa</taxon>
        <taxon>Chordata</taxon>
        <taxon>Craniata</taxon>
        <taxon>Vertebrata</taxon>
        <taxon>Euteleostomi</taxon>
        <taxon>Mammalia</taxon>
        <taxon>Eutheria</taxon>
        <taxon>Euarchontoglires</taxon>
        <taxon>Glires</taxon>
        <taxon>Rodentia</taxon>
        <taxon>Myomorpha</taxon>
        <taxon>Muroidea</taxon>
        <taxon>Muridae</taxon>
        <taxon>Murinae</taxon>
        <taxon>Mus</taxon>
        <taxon>Mus</taxon>
    </lineage>
</organism>
<feature type="chain" id="PRO_0000444982" description="Protein SPMIP1">
    <location>
        <begin position="1"/>
        <end position="177"/>
    </location>
</feature>
<feature type="region of interest" description="Disordered" evidence="1">
    <location>
        <begin position="47"/>
        <end position="80"/>
    </location>
</feature>
<protein>
    <recommendedName>
        <fullName evidence="2">Protein SPMIP1</fullName>
    </recommendedName>
    <alternativeName>
        <fullName evidence="2">ATP6V1F neighbor gene protein homolog</fullName>
    </alternativeName>
    <alternativeName>
        <fullName evidence="2">Protein ATP6V1FNB</fullName>
    </alternativeName>
    <alternativeName>
        <fullName>Sperm-associated microtubule inner protein 1</fullName>
    </alternativeName>
</protein>
<reference key="1">
    <citation type="journal article" date="2009" name="PLoS Biol.">
        <title>Lineage-specific biology revealed by a finished genome assembly of the mouse.</title>
        <authorList>
            <person name="Church D.M."/>
            <person name="Goodstadt L."/>
            <person name="Hillier L.W."/>
            <person name="Zody M.C."/>
            <person name="Goldstein S."/>
            <person name="She X."/>
            <person name="Bult C.J."/>
            <person name="Agarwala R."/>
            <person name="Cherry J.L."/>
            <person name="DiCuccio M."/>
            <person name="Hlavina W."/>
            <person name="Kapustin Y."/>
            <person name="Meric P."/>
            <person name="Maglott D."/>
            <person name="Birtle Z."/>
            <person name="Marques A.C."/>
            <person name="Graves T."/>
            <person name="Zhou S."/>
            <person name="Teague B."/>
            <person name="Potamousis K."/>
            <person name="Churas C."/>
            <person name="Place M."/>
            <person name="Herschleb J."/>
            <person name="Runnheim R."/>
            <person name="Forrest D."/>
            <person name="Amos-Landgraf J."/>
            <person name="Schwartz D.C."/>
            <person name="Cheng Z."/>
            <person name="Lindblad-Toh K."/>
            <person name="Eichler E.E."/>
            <person name="Ponting C.P."/>
        </authorList>
    </citation>
    <scope>NUCLEOTIDE SEQUENCE [LARGE SCALE GENOMIC DNA]</scope>
    <source>
        <strain>C57BL/6J</strain>
    </source>
</reference>
<reference key="2">
    <citation type="journal article" date="2004" name="Genome Res.">
        <title>The status, quality, and expansion of the NIH full-length cDNA project: the Mammalian Gene Collection (MGC).</title>
        <authorList>
            <consortium name="The MGC Project Team"/>
        </authorList>
    </citation>
    <scope>NUCLEOTIDE SEQUENCE [LARGE SCALE MRNA]</scope>
    <source>
        <tissue>Testis</tissue>
    </source>
</reference>
<keyword id="KW-1185">Reference proteome</keyword>
<dbReference type="EMBL" id="AC079276">
    <property type="status" value="NOT_ANNOTATED_CDS"/>
    <property type="molecule type" value="Genomic_DNA"/>
</dbReference>
<dbReference type="EMBL" id="BC147635">
    <property type="protein sequence ID" value="AAI47636.1"/>
    <property type="molecule type" value="mRNA"/>
</dbReference>
<dbReference type="EMBL" id="BC147645">
    <property type="protein sequence ID" value="AAI47646.1"/>
    <property type="molecule type" value="mRNA"/>
</dbReference>
<dbReference type="CCDS" id="CCDS51737.1"/>
<dbReference type="RefSeq" id="NP_001138832.1">
    <property type="nucleotide sequence ID" value="NM_001145360.1"/>
</dbReference>
<dbReference type="SMR" id="B9EJX3"/>
<dbReference type="STRING" id="10090.ENSMUSP00000127891"/>
<dbReference type="iPTMnet" id="B9EJX3"/>
<dbReference type="PhosphoSitePlus" id="B9EJX3"/>
<dbReference type="PaxDb" id="10090-ENSMUSP00000127891"/>
<dbReference type="ProteomicsDB" id="342585"/>
<dbReference type="Ensembl" id="ENSMUST00000171317.2">
    <property type="protein sequence ID" value="ENSMUSP00000127891.2"/>
    <property type="gene ID" value="ENSMUSG00000090685.2"/>
</dbReference>
<dbReference type="GeneID" id="668210"/>
<dbReference type="KEGG" id="mmu:668210"/>
<dbReference type="UCSC" id="uc012ejd.1">
    <property type="organism name" value="mouse"/>
</dbReference>
<dbReference type="AGR" id="MGI:3644212"/>
<dbReference type="CTD" id="100130705"/>
<dbReference type="MGI" id="MGI:3644212">
    <property type="gene designation" value="Spmip1"/>
</dbReference>
<dbReference type="VEuPathDB" id="HostDB:ENSMUSG00000090685"/>
<dbReference type="eggNOG" id="ENOG502S53Z">
    <property type="taxonomic scope" value="Eukaryota"/>
</dbReference>
<dbReference type="GeneTree" id="ENSGT00390000003224"/>
<dbReference type="HOGENOM" id="CLU_093510_0_0_1"/>
<dbReference type="InParanoid" id="B9EJX3"/>
<dbReference type="OMA" id="QRQNFWK"/>
<dbReference type="OrthoDB" id="410807at2759"/>
<dbReference type="PhylomeDB" id="B9EJX3"/>
<dbReference type="BioGRID-ORCS" id="668210">
    <property type="hits" value="1 hit in 70 CRISPR screens"/>
</dbReference>
<dbReference type="PRO" id="PR:B9EJX3"/>
<dbReference type="Proteomes" id="UP000000589">
    <property type="component" value="Chromosome 6"/>
</dbReference>
<dbReference type="RNAct" id="B9EJX3">
    <property type="molecule type" value="protein"/>
</dbReference>
<dbReference type="Bgee" id="ENSMUSG00000090685">
    <property type="expression patterns" value="Expressed in testis and 6 other cell types or tissues"/>
</dbReference>
<dbReference type="InterPro" id="IPR054323">
    <property type="entry name" value="SPMIP1_C"/>
</dbReference>
<dbReference type="PANTHER" id="PTHR35826:SF2">
    <property type="entry name" value="PROTEIN ATP6V1FNB"/>
    <property type="match status" value="1"/>
</dbReference>
<dbReference type="PANTHER" id="PTHR35826">
    <property type="entry name" value="PROTEIN ATP6V1FNB-LIKE"/>
    <property type="match status" value="1"/>
</dbReference>
<dbReference type="Pfam" id="PF22589">
    <property type="entry name" value="SPMIP1"/>
    <property type="match status" value="1"/>
</dbReference>
<name>SMIP1_MOUSE</name>
<accession>B9EJX3</accession>
<sequence length="177" mass="20412">MSRQLNMDTLRQNFWKEEYLKEMMLRYEWQRKYGTLVKAKQKAKAASRLPRKLPTLLPQASVAPPPPASKTTPSKAPSPAPEPLFLSDMYPVAPNTKALLYEGISHDLQGRYQYLNTRKLDLPETRYLFPITTNFTYGWQLGPPTKQELVSCKMCRIESFFRKNGAFALLDPRDLAL</sequence>